<sequence>MDISAGIQASLAGRYASALFELAAEEGVVTAVESDLDKLHAALGESDDLKAVTNNPEISRKDQASAIEGVAGVLGLSPLTTKFLGTLAANRRLSKLGDMIRAFRTIAAAQRGEVTADVVSAHPLKDDQLESLKTKLTAREGRTVKLSPTVDPDLLGGLVVTIGSKRIDGSIRTRLNTLANAMKG</sequence>
<protein>
    <recommendedName>
        <fullName evidence="1">ATP synthase subunit delta</fullName>
    </recommendedName>
    <alternativeName>
        <fullName evidence="1">ATP synthase F(1) sector subunit delta</fullName>
    </alternativeName>
    <alternativeName>
        <fullName evidence="1">F-type ATPase subunit delta</fullName>
        <shortName evidence="1">F-ATPase subunit delta</shortName>
    </alternativeName>
</protein>
<dbReference type="EMBL" id="CP000157">
    <property type="protein sequence ID" value="ABC63845.1"/>
    <property type="status" value="ALT_INIT"/>
    <property type="molecule type" value="Genomic_DNA"/>
</dbReference>
<dbReference type="RefSeq" id="WP_041685898.1">
    <property type="nucleotide sequence ID" value="NC_007722.1"/>
</dbReference>
<dbReference type="SMR" id="Q2N8Z6"/>
<dbReference type="STRING" id="314225.ELI_08765"/>
<dbReference type="KEGG" id="eli:ELI_08765"/>
<dbReference type="eggNOG" id="COG0712">
    <property type="taxonomic scope" value="Bacteria"/>
</dbReference>
<dbReference type="HOGENOM" id="CLU_085114_0_1_5"/>
<dbReference type="OrthoDB" id="9796185at2"/>
<dbReference type="Proteomes" id="UP000008808">
    <property type="component" value="Chromosome"/>
</dbReference>
<dbReference type="GO" id="GO:0005886">
    <property type="term" value="C:plasma membrane"/>
    <property type="evidence" value="ECO:0007669"/>
    <property type="project" value="UniProtKB-SubCell"/>
</dbReference>
<dbReference type="GO" id="GO:0045259">
    <property type="term" value="C:proton-transporting ATP synthase complex"/>
    <property type="evidence" value="ECO:0007669"/>
    <property type="project" value="UniProtKB-KW"/>
</dbReference>
<dbReference type="GO" id="GO:0046933">
    <property type="term" value="F:proton-transporting ATP synthase activity, rotational mechanism"/>
    <property type="evidence" value="ECO:0007669"/>
    <property type="project" value="UniProtKB-UniRule"/>
</dbReference>
<dbReference type="Gene3D" id="1.10.520.20">
    <property type="entry name" value="N-terminal domain of the delta subunit of the F1F0-ATP synthase"/>
    <property type="match status" value="1"/>
</dbReference>
<dbReference type="HAMAP" id="MF_01416">
    <property type="entry name" value="ATP_synth_delta_bact"/>
    <property type="match status" value="1"/>
</dbReference>
<dbReference type="InterPro" id="IPR026015">
    <property type="entry name" value="ATP_synth_OSCP/delta_N_sf"/>
</dbReference>
<dbReference type="InterPro" id="IPR000711">
    <property type="entry name" value="ATPase_OSCP/dsu"/>
</dbReference>
<dbReference type="NCBIfam" id="TIGR01145">
    <property type="entry name" value="ATP_synt_delta"/>
    <property type="match status" value="1"/>
</dbReference>
<dbReference type="NCBIfam" id="NF004406">
    <property type="entry name" value="PRK05758.3-2"/>
    <property type="match status" value="1"/>
</dbReference>
<dbReference type="PANTHER" id="PTHR11910">
    <property type="entry name" value="ATP SYNTHASE DELTA CHAIN"/>
    <property type="match status" value="1"/>
</dbReference>
<dbReference type="Pfam" id="PF00213">
    <property type="entry name" value="OSCP"/>
    <property type="match status" value="1"/>
</dbReference>
<dbReference type="PRINTS" id="PR00125">
    <property type="entry name" value="ATPASEDELTA"/>
</dbReference>
<dbReference type="SUPFAM" id="SSF47928">
    <property type="entry name" value="N-terminal domain of the delta subunit of the F1F0-ATP synthase"/>
    <property type="match status" value="1"/>
</dbReference>
<proteinExistence type="inferred from homology"/>
<organism>
    <name type="scientific">Erythrobacter litoralis (strain HTCC2594)</name>
    <dbReference type="NCBI Taxonomy" id="314225"/>
    <lineage>
        <taxon>Bacteria</taxon>
        <taxon>Pseudomonadati</taxon>
        <taxon>Pseudomonadota</taxon>
        <taxon>Alphaproteobacteria</taxon>
        <taxon>Sphingomonadales</taxon>
        <taxon>Erythrobacteraceae</taxon>
        <taxon>Erythrobacter/Porphyrobacter group</taxon>
        <taxon>Erythrobacter</taxon>
    </lineage>
</organism>
<comment type="function">
    <text evidence="1">F(1)F(0) ATP synthase produces ATP from ADP in the presence of a proton or sodium gradient. F-type ATPases consist of two structural domains, F(1) containing the extramembraneous catalytic core and F(0) containing the membrane proton channel, linked together by a central stalk and a peripheral stalk. During catalysis, ATP synthesis in the catalytic domain of F(1) is coupled via a rotary mechanism of the central stalk subunits to proton translocation.</text>
</comment>
<comment type="function">
    <text evidence="1">This protein is part of the stalk that links CF(0) to CF(1). It either transmits conformational changes from CF(0) to CF(1) or is implicated in proton conduction.</text>
</comment>
<comment type="subunit">
    <text evidence="1">F-type ATPases have 2 components, F(1) - the catalytic core - and F(0) - the membrane proton channel. F(1) has five subunits: alpha(3), beta(3), gamma(1), delta(1), epsilon(1). CF(0) has four main subunits: a(1), b(1), b'(1) and c(10-14). The alpha and beta chains form an alternating ring which encloses part of the gamma chain. F(1) is attached to F(0) by a central stalk formed by the gamma and epsilon chains, while a peripheral stalk is formed by the delta, b and b' chains.</text>
</comment>
<comment type="subcellular location">
    <subcellularLocation>
        <location evidence="1">Cell inner membrane</location>
        <topology evidence="1">Peripheral membrane protein</topology>
    </subcellularLocation>
</comment>
<comment type="similarity">
    <text evidence="1">Belongs to the ATPase delta chain family.</text>
</comment>
<comment type="sequence caution" evidence="2">
    <conflict type="erroneous initiation">
        <sequence resource="EMBL-CDS" id="ABC63845"/>
    </conflict>
</comment>
<name>ATPD_ERYLH</name>
<feature type="chain" id="PRO_0000382098" description="ATP synthase subunit delta">
    <location>
        <begin position="1"/>
        <end position="184"/>
    </location>
</feature>
<accession>Q2N8Z6</accession>
<keyword id="KW-0066">ATP synthesis</keyword>
<keyword id="KW-0997">Cell inner membrane</keyword>
<keyword id="KW-1003">Cell membrane</keyword>
<keyword id="KW-0139">CF(1)</keyword>
<keyword id="KW-0375">Hydrogen ion transport</keyword>
<keyword id="KW-0406">Ion transport</keyword>
<keyword id="KW-0472">Membrane</keyword>
<keyword id="KW-1185">Reference proteome</keyword>
<keyword id="KW-0813">Transport</keyword>
<reference key="1">
    <citation type="journal article" date="2009" name="J. Bacteriol.">
        <title>Complete genome sequence of Erythrobacter litoralis HTCC2594.</title>
        <authorList>
            <person name="Oh H.M."/>
            <person name="Giovannoni S.J."/>
            <person name="Ferriera S."/>
            <person name="Johnson J."/>
            <person name="Cho J.C."/>
        </authorList>
    </citation>
    <scope>NUCLEOTIDE SEQUENCE [LARGE SCALE GENOMIC DNA]</scope>
    <source>
        <strain>HTCC2594</strain>
    </source>
</reference>
<gene>
    <name evidence="1" type="primary">atpH</name>
    <name type="ordered locus">ELI_08765</name>
</gene>
<evidence type="ECO:0000255" key="1">
    <source>
        <dbReference type="HAMAP-Rule" id="MF_01416"/>
    </source>
</evidence>
<evidence type="ECO:0000305" key="2"/>